<comment type="function">
    <text evidence="1">Component of the helicase/primase complex. Unwinds the DNA at the replication forks and generates single-stranded DNA for both leading and lagging strand synthesis. The primase synthesizes short RNA primers on the lagging strand that the polymerase elongates using dNTPs. Possesses helicase-like motifs and therefore may act as the helicase subunit of the complex.</text>
</comment>
<comment type="subunit">
    <text evidence="1">Associates with the primase and the primase-associated factor to form the helicase-primase complex.</text>
</comment>
<comment type="subcellular location">
    <subcellularLocation>
        <location evidence="1">Host nucleus</location>
    </subcellularLocation>
</comment>
<comment type="similarity">
    <text evidence="1">Belongs to the herpesviridae helicase family.</text>
</comment>
<proteinExistence type="inferred from homology"/>
<sequence length="881" mass="98884">MAASGGEGSRDVRAPGPPPQQPGARPAVRFRDEAFLNFTSMHGVQPIIARIRELSQQQLDVTQVPRLQWFRDVAALEVPTGLPLREFPFAAYLITGNAGSGKSTCVQTLNEVLDCVVTGATRIAAQNMYVKLSGAFLSRPINTIFHEFGFRGNHVQAQLGQHPYTLASSPASLEDLQRRDLTYYWEVILDITKRALAAHGGEDARNEFHALTALEQTLGLGQGALTRLASVTHGALPAFTRSNIIVIDEAGLLGRHLLTTVVYCWWMINALYHTPQYAGRLRPVLVCVGSPTQTASLESTFEHQKLRCSVRQSENVLTYLICNRTLREYTRLSHSWAIFINNKRCVEHEFGNLMKVLEYGLPITEEHMQFVDRFVVPESYITNPANLPGWTRLFSSHKEVSAYMAKLHAYLKVTREGEFVVFTLPVLTFVSVKEFDEYRRLTQQPTLTMEKWITANASRITNYSQSQDQDAGHVRCEVHSKQQLVVARNDITYVLNSQVAVTARLRKMVFGFDGTFRTFEAVLRDDSFVKTQGETSVEFAYRFLSRLMFGGLIHFYNFLQRPGLDATQRTLAYGRLGELTAELLSLRRDAAGASATRAADTSDRSPGERAFNFKHLGPRDGGPDDFPDDDLDVIFAGLDEQQLDVFYCHYALEEPETTAAVHAQFGLLKRAFLGRYLILRELFGEVFESAPFSTYVDNVIFRGCELLTGSPRGGLMSVALQTDNYTLMGYTYTRVFAFAEELRRRHATAGVAEFLEESPLPYIVLRDQHGFMSVVNTNISEFVESIDSTELAMAINADYGISSKLAMTITRSQGLSLDKVAICFTPGNLRLNSAYVAMSRTTSSEFLHMNLNPLRERHERDDVISEHILSALRDPNVVIVY</sequence>
<accession>P28277</accession>
<accession>P89428</accession>
<keyword id="KW-0067">ATP-binding</keyword>
<keyword id="KW-0235">DNA replication</keyword>
<keyword id="KW-0347">Helicase</keyword>
<keyword id="KW-1048">Host nucleus</keyword>
<keyword id="KW-0378">Hydrolase</keyword>
<keyword id="KW-0547">Nucleotide-binding</keyword>
<keyword id="KW-1185">Reference proteome</keyword>
<name>HELI_HHV2H</name>
<organism>
    <name type="scientific">Human herpesvirus 2 (strain HG52)</name>
    <name type="common">HHV-2</name>
    <name type="synonym">Human herpes simplex virus 2</name>
    <dbReference type="NCBI Taxonomy" id="10315"/>
    <lineage>
        <taxon>Viruses</taxon>
        <taxon>Duplodnaviria</taxon>
        <taxon>Heunggongvirae</taxon>
        <taxon>Peploviricota</taxon>
        <taxon>Herviviricetes</taxon>
        <taxon>Herpesvirales</taxon>
        <taxon>Orthoherpesviridae</taxon>
        <taxon>Alphaherpesvirinae</taxon>
        <taxon>Simplexvirus</taxon>
        <taxon>Simplexvirus humanalpha2</taxon>
        <taxon>Human herpesvirus 2</taxon>
    </lineage>
</organism>
<dbReference type="EC" id="3.6.4.-" evidence="1"/>
<dbReference type="EMBL" id="Z86099">
    <property type="protein sequence ID" value="CAB06765.1"/>
    <property type="molecule type" value="Genomic_DNA"/>
</dbReference>
<dbReference type="EMBL" id="D10470">
    <property type="protein sequence ID" value="BAA01267.1"/>
    <property type="molecule type" value="Genomic_DNA"/>
</dbReference>
<dbReference type="PIR" id="PQ0332">
    <property type="entry name" value="WMBEHQ"/>
</dbReference>
<dbReference type="RefSeq" id="YP_009137156.1">
    <property type="nucleotide sequence ID" value="NC_001798.2"/>
</dbReference>
<dbReference type="ChEMBL" id="CHEMBL4630722"/>
<dbReference type="DNASU" id="1487338"/>
<dbReference type="GeneID" id="1487338"/>
<dbReference type="KEGG" id="vg:1487338"/>
<dbReference type="Proteomes" id="UP000001874">
    <property type="component" value="Segment"/>
</dbReference>
<dbReference type="GO" id="GO:0042025">
    <property type="term" value="C:host cell nucleus"/>
    <property type="evidence" value="ECO:0007669"/>
    <property type="project" value="UniProtKB-SubCell"/>
</dbReference>
<dbReference type="GO" id="GO:0005524">
    <property type="term" value="F:ATP binding"/>
    <property type="evidence" value="ECO:0007669"/>
    <property type="project" value="UniProtKB-KW"/>
</dbReference>
<dbReference type="GO" id="GO:0004386">
    <property type="term" value="F:helicase activity"/>
    <property type="evidence" value="ECO:0007669"/>
    <property type="project" value="UniProtKB-KW"/>
</dbReference>
<dbReference type="GO" id="GO:0016787">
    <property type="term" value="F:hydrolase activity"/>
    <property type="evidence" value="ECO:0007669"/>
    <property type="project" value="UniProtKB-KW"/>
</dbReference>
<dbReference type="GO" id="GO:0006260">
    <property type="term" value="P:DNA replication"/>
    <property type="evidence" value="ECO:0007669"/>
    <property type="project" value="UniProtKB-KW"/>
</dbReference>
<dbReference type="Gene3D" id="3.40.50.300">
    <property type="entry name" value="P-loop containing nucleotide triphosphate hydrolases"/>
    <property type="match status" value="1"/>
</dbReference>
<dbReference type="HAMAP" id="MF_04030">
    <property type="entry name" value="HSV_HELI"/>
    <property type="match status" value="1"/>
</dbReference>
<dbReference type="InterPro" id="IPR003840">
    <property type="entry name" value="DNA_helicase_dom"/>
</dbReference>
<dbReference type="InterPro" id="IPR034711">
    <property type="entry name" value="HSV_HELI"/>
</dbReference>
<dbReference type="InterPro" id="IPR027417">
    <property type="entry name" value="P-loop_NTPase"/>
</dbReference>
<dbReference type="Pfam" id="PF02689">
    <property type="entry name" value="Herpes_Helicase"/>
    <property type="match status" value="1"/>
</dbReference>
<dbReference type="SUPFAM" id="SSF52540">
    <property type="entry name" value="P-loop containing nucleoside triphosphate hydrolases"/>
    <property type="match status" value="2"/>
</dbReference>
<evidence type="ECO:0000255" key="1">
    <source>
        <dbReference type="HAMAP-Rule" id="MF_04030"/>
    </source>
</evidence>
<evidence type="ECO:0000256" key="2">
    <source>
        <dbReference type="SAM" id="MobiDB-lite"/>
    </source>
</evidence>
<protein>
    <recommendedName>
        <fullName evidence="1">DNA replication helicase</fullName>
        <ecNumber evidence="1">3.6.4.-</ecNumber>
    </recommendedName>
</protein>
<feature type="chain" id="PRO_0000115846" description="DNA replication helicase">
    <location>
        <begin position="1"/>
        <end position="881"/>
    </location>
</feature>
<feature type="region of interest" description="Disordered" evidence="2">
    <location>
        <begin position="1"/>
        <end position="26"/>
    </location>
</feature>
<feature type="binding site" evidence="1">
    <location>
        <begin position="96"/>
        <end position="103"/>
    </location>
    <ligand>
        <name>ATP</name>
        <dbReference type="ChEBI" id="CHEBI:30616"/>
    </ligand>
</feature>
<gene>
    <name evidence="1" type="primary">HELI</name>
    <name type="ordered locus">UL5</name>
</gene>
<organismHost>
    <name type="scientific">Homo sapiens</name>
    <name type="common">Human</name>
    <dbReference type="NCBI Taxonomy" id="9606"/>
</organismHost>
<reference key="1">
    <citation type="journal article" date="1998" name="J. Virol.">
        <title>The genome sequence of herpes simplex virus type 2.</title>
        <authorList>
            <person name="Dolan A."/>
            <person name="Jamieson F.E."/>
            <person name="Cunningham C."/>
            <person name="Barnett B.C."/>
            <person name="McGeoch D.J."/>
        </authorList>
    </citation>
    <scope>NUCLEOTIDE SEQUENCE [LARGE SCALE GENOMIC DNA]</scope>
</reference>
<reference key="2">
    <citation type="journal article" date="1991" name="J. Gen. Virol.">
        <title>Comparative sequence analysis of the long repeat regions and adjoining parts of the long unique regions in the genomes of herpes simplex viruses types 1 and 2.</title>
        <authorList>
            <person name="McGeoch D.J."/>
            <person name="Cunningham C."/>
            <person name="McIntyre G."/>
            <person name="Dolan A."/>
        </authorList>
    </citation>
    <scope>NUCLEOTIDE SEQUENCE [GENOMIC DNA] OF 99-881</scope>
</reference>